<gene>
    <name evidence="1" type="primary">uxaC</name>
    <name type="ordered locus">Ecok1_31050</name>
    <name type="ORF">APECO1_3327</name>
</gene>
<proteinExistence type="inferred from homology"/>
<name>UXAC_ECOK1</name>
<keyword id="KW-0413">Isomerase</keyword>
<keyword id="KW-1185">Reference proteome</keyword>
<reference key="1">
    <citation type="journal article" date="2007" name="J. Bacteriol.">
        <title>The genome sequence of avian pathogenic Escherichia coli strain O1:K1:H7 shares strong similarities with human extraintestinal pathogenic E. coli genomes.</title>
        <authorList>
            <person name="Johnson T.J."/>
            <person name="Kariyawasam S."/>
            <person name="Wannemuehler Y."/>
            <person name="Mangiamele P."/>
            <person name="Johnson S.J."/>
            <person name="Doetkott C."/>
            <person name="Skyberg J.A."/>
            <person name="Lynne A.M."/>
            <person name="Johnson J.R."/>
            <person name="Nolan L.K."/>
        </authorList>
    </citation>
    <scope>NUCLEOTIDE SEQUENCE [LARGE SCALE GENOMIC DNA]</scope>
</reference>
<dbReference type="EC" id="5.3.1.12" evidence="1"/>
<dbReference type="EMBL" id="CP000468">
    <property type="protein sequence ID" value="ABJ02599.1"/>
    <property type="molecule type" value="Genomic_DNA"/>
</dbReference>
<dbReference type="RefSeq" id="WP_000187442.1">
    <property type="nucleotide sequence ID" value="NZ_CADILS010000003.1"/>
</dbReference>
<dbReference type="SMR" id="A1AG09"/>
<dbReference type="GeneID" id="93778895"/>
<dbReference type="KEGG" id="ecv:APECO1_3327"/>
<dbReference type="HOGENOM" id="CLU_044465_1_0_6"/>
<dbReference type="UniPathway" id="UPA00246"/>
<dbReference type="Proteomes" id="UP000008216">
    <property type="component" value="Chromosome"/>
</dbReference>
<dbReference type="GO" id="GO:0008880">
    <property type="term" value="F:glucuronate isomerase activity"/>
    <property type="evidence" value="ECO:0007669"/>
    <property type="project" value="UniProtKB-UniRule"/>
</dbReference>
<dbReference type="GO" id="GO:0019698">
    <property type="term" value="P:D-galacturonate catabolic process"/>
    <property type="evidence" value="ECO:0007669"/>
    <property type="project" value="TreeGrafter"/>
</dbReference>
<dbReference type="GO" id="GO:0042840">
    <property type="term" value="P:D-glucuronate catabolic process"/>
    <property type="evidence" value="ECO:0007669"/>
    <property type="project" value="TreeGrafter"/>
</dbReference>
<dbReference type="FunFam" id="1.10.2020.10:FF:000001">
    <property type="entry name" value="Uronate isomerase"/>
    <property type="match status" value="1"/>
</dbReference>
<dbReference type="Gene3D" id="3.20.20.140">
    <property type="entry name" value="Metal-dependent hydrolases"/>
    <property type="match status" value="1"/>
</dbReference>
<dbReference type="Gene3D" id="1.10.2020.10">
    <property type="entry name" value="uronate isomerase, domain 2, chain A"/>
    <property type="match status" value="1"/>
</dbReference>
<dbReference type="HAMAP" id="MF_00675">
    <property type="entry name" value="UxaC"/>
    <property type="match status" value="1"/>
</dbReference>
<dbReference type="InterPro" id="IPR032466">
    <property type="entry name" value="Metal_Hydrolase"/>
</dbReference>
<dbReference type="InterPro" id="IPR003766">
    <property type="entry name" value="Uronate_isomerase"/>
</dbReference>
<dbReference type="NCBIfam" id="NF002794">
    <property type="entry name" value="PRK02925.1"/>
    <property type="match status" value="1"/>
</dbReference>
<dbReference type="PANTHER" id="PTHR30068">
    <property type="entry name" value="URONATE ISOMERASE"/>
    <property type="match status" value="1"/>
</dbReference>
<dbReference type="PANTHER" id="PTHR30068:SF4">
    <property type="entry name" value="URONATE ISOMERASE"/>
    <property type="match status" value="1"/>
</dbReference>
<dbReference type="Pfam" id="PF02614">
    <property type="entry name" value="UxaC"/>
    <property type="match status" value="1"/>
</dbReference>
<dbReference type="SUPFAM" id="SSF51556">
    <property type="entry name" value="Metallo-dependent hydrolases"/>
    <property type="match status" value="1"/>
</dbReference>
<sequence>MTPFMTEDFLLDTEFARRLYHDYAKDQPIFDYHCHLPPQQIAEDYRFKNLYDIWLKGDHYKWRAMRTNGVAERLCTGDASDREKFDAWAATVPHTIGNPLYHWTHLELRRPFGITGKLLSPSTADEIWNECNELLAQDNFSARGIMQQMNVKMVGTTDDPIDSLEHHAEIAKDGSFTIKVLPSWRPDKAFNIEQATFNDYMAKLGEVSDTDIRRFADLQTALTKRLDHFAAHGCKVSDHALDVVMFAEANEAELDSILARRLAGETLSEHEVAQFKTAVLVFLGAEYARRGWVQQYHIGALRNNNLRQFKLLGPDVGFDSINDRPMAEELSKLLSKQNEENLLPKTILYCLNPRDNEVLGTMIGNFQGEGMPGKMQFGSGWWFNDQKDGMERQMTQLAQLGLLSRFVGMLTDSRSFLSYTRHEYFRRILCQMIGRWVEAGEAPADINLLGEMVKNICFNNARDYFAIELN</sequence>
<accession>A1AG09</accession>
<evidence type="ECO:0000255" key="1">
    <source>
        <dbReference type="HAMAP-Rule" id="MF_00675"/>
    </source>
</evidence>
<organism>
    <name type="scientific">Escherichia coli O1:K1 / APEC</name>
    <dbReference type="NCBI Taxonomy" id="405955"/>
    <lineage>
        <taxon>Bacteria</taxon>
        <taxon>Pseudomonadati</taxon>
        <taxon>Pseudomonadota</taxon>
        <taxon>Gammaproteobacteria</taxon>
        <taxon>Enterobacterales</taxon>
        <taxon>Enterobacteriaceae</taxon>
        <taxon>Escherichia</taxon>
    </lineage>
</organism>
<comment type="catalytic activity">
    <reaction evidence="1">
        <text>D-glucuronate = D-fructuronate</text>
        <dbReference type="Rhea" id="RHEA:13049"/>
        <dbReference type="ChEBI" id="CHEBI:58720"/>
        <dbReference type="ChEBI" id="CHEBI:59863"/>
        <dbReference type="EC" id="5.3.1.12"/>
    </reaction>
</comment>
<comment type="catalytic activity">
    <reaction evidence="1">
        <text>aldehydo-D-galacturonate = keto-D-tagaturonate</text>
        <dbReference type="Rhea" id="RHEA:27702"/>
        <dbReference type="ChEBI" id="CHEBI:12952"/>
        <dbReference type="ChEBI" id="CHEBI:17886"/>
        <dbReference type="EC" id="5.3.1.12"/>
    </reaction>
</comment>
<comment type="pathway">
    <text evidence="1">Carbohydrate metabolism; pentose and glucuronate interconversion.</text>
</comment>
<comment type="similarity">
    <text evidence="1">Belongs to the metallo-dependent hydrolases superfamily. Uronate isomerase family.</text>
</comment>
<feature type="chain" id="PRO_1000044764" description="Uronate isomerase">
    <location>
        <begin position="1"/>
        <end position="470"/>
    </location>
</feature>
<protein>
    <recommendedName>
        <fullName evidence="1">Uronate isomerase</fullName>
        <ecNumber evidence="1">5.3.1.12</ecNumber>
    </recommendedName>
    <alternativeName>
        <fullName evidence="1">Glucuronate isomerase</fullName>
    </alternativeName>
    <alternativeName>
        <fullName evidence="1">Uronic isomerase</fullName>
    </alternativeName>
</protein>